<accession>Q55E83</accession>
<sequence>MSSTTNSVKGKEVLKKLGELIPLNLAEKWDNVGLLVEPSNTDSMDIERIFLTNDLTEPVLQEAINEKASFIISYHPPLFNQFKTVNQKSISQRIAIKSIENRIPIYSPHSALDSCDGGLNDWISNALIKLNSGKGRSKPITPYQESLKSTQKISIYLHTNQPLTAEILKQLELNSNFQFYSTDKIELSCDQQQLLILINLIKSFSNEIKNWDIINQEKVLSLNNGSGKLVTLDDDGIDIDVIVKGVKELFNIEYVRIGRPLSGESKKIKTISLCAGSGGSVVFNAKADLYLTGELTHHAILDACAKGSYVIVCDHSNSERDYLPQILKPNLEKLFNGRIKVIVSKLDTDPLKVI</sequence>
<gene>
    <name type="primary">nif3</name>
    <name evidence="1" type="synonym">nif3l1</name>
    <name type="ORF">DDB_G0270854</name>
</gene>
<reference key="1">
    <citation type="journal article" date="2005" name="Nature">
        <title>The genome of the social amoeba Dictyostelium discoideum.</title>
        <authorList>
            <person name="Eichinger L."/>
            <person name="Pachebat J.A."/>
            <person name="Gloeckner G."/>
            <person name="Rajandream M.A."/>
            <person name="Sucgang R."/>
            <person name="Berriman M."/>
            <person name="Song J."/>
            <person name="Olsen R."/>
            <person name="Szafranski K."/>
            <person name="Xu Q."/>
            <person name="Tunggal B."/>
            <person name="Kummerfeld S."/>
            <person name="Madera M."/>
            <person name="Konfortov B.A."/>
            <person name="Rivero F."/>
            <person name="Bankier A.T."/>
            <person name="Lehmann R."/>
            <person name="Hamlin N."/>
            <person name="Davies R."/>
            <person name="Gaudet P."/>
            <person name="Fey P."/>
            <person name="Pilcher K."/>
            <person name="Chen G."/>
            <person name="Saunders D."/>
            <person name="Sodergren E.J."/>
            <person name="Davis P."/>
            <person name="Kerhornou A."/>
            <person name="Nie X."/>
            <person name="Hall N."/>
            <person name="Anjard C."/>
            <person name="Hemphill L."/>
            <person name="Bason N."/>
            <person name="Farbrother P."/>
            <person name="Desany B."/>
            <person name="Just E."/>
            <person name="Morio T."/>
            <person name="Rost R."/>
            <person name="Churcher C.M."/>
            <person name="Cooper J."/>
            <person name="Haydock S."/>
            <person name="van Driessche N."/>
            <person name="Cronin A."/>
            <person name="Goodhead I."/>
            <person name="Muzny D.M."/>
            <person name="Mourier T."/>
            <person name="Pain A."/>
            <person name="Lu M."/>
            <person name="Harper D."/>
            <person name="Lindsay R."/>
            <person name="Hauser H."/>
            <person name="James K.D."/>
            <person name="Quiles M."/>
            <person name="Madan Babu M."/>
            <person name="Saito T."/>
            <person name="Buchrieser C."/>
            <person name="Wardroper A."/>
            <person name="Felder M."/>
            <person name="Thangavelu M."/>
            <person name="Johnson D."/>
            <person name="Knights A."/>
            <person name="Loulseged H."/>
            <person name="Mungall K.L."/>
            <person name="Oliver K."/>
            <person name="Price C."/>
            <person name="Quail M.A."/>
            <person name="Urushihara H."/>
            <person name="Hernandez J."/>
            <person name="Rabbinowitsch E."/>
            <person name="Steffen D."/>
            <person name="Sanders M."/>
            <person name="Ma J."/>
            <person name="Kohara Y."/>
            <person name="Sharp S."/>
            <person name="Simmonds M.N."/>
            <person name="Spiegler S."/>
            <person name="Tivey A."/>
            <person name="Sugano S."/>
            <person name="White B."/>
            <person name="Walker D."/>
            <person name="Woodward J.R."/>
            <person name="Winckler T."/>
            <person name="Tanaka Y."/>
            <person name="Shaulsky G."/>
            <person name="Schleicher M."/>
            <person name="Weinstock G.M."/>
            <person name="Rosenthal A."/>
            <person name="Cox E.C."/>
            <person name="Chisholm R.L."/>
            <person name="Gibbs R.A."/>
            <person name="Loomis W.F."/>
            <person name="Platzer M."/>
            <person name="Kay R.R."/>
            <person name="Williams J.G."/>
            <person name="Dear P.H."/>
            <person name="Noegel A.A."/>
            <person name="Barrell B.G."/>
            <person name="Kuspa A."/>
        </authorList>
    </citation>
    <scope>NUCLEOTIDE SEQUENCE [LARGE SCALE GENOMIC DNA]</scope>
    <source>
        <strain>AX4</strain>
    </source>
</reference>
<dbReference type="EMBL" id="AAFI02000005">
    <property type="protein sequence ID" value="EAL72777.1"/>
    <property type="molecule type" value="Genomic_DNA"/>
</dbReference>
<dbReference type="RefSeq" id="XP_645898.1">
    <property type="nucleotide sequence ID" value="XM_640806.1"/>
</dbReference>
<dbReference type="SMR" id="Q55E83"/>
<dbReference type="FunCoup" id="Q55E83">
    <property type="interactions" value="716"/>
</dbReference>
<dbReference type="STRING" id="44689.Q55E83"/>
<dbReference type="PaxDb" id="44689-DDB0216648"/>
<dbReference type="EnsemblProtists" id="EAL72777">
    <property type="protein sequence ID" value="EAL72777"/>
    <property type="gene ID" value="DDB_G0270854"/>
</dbReference>
<dbReference type="GeneID" id="8616840"/>
<dbReference type="KEGG" id="ddi:DDB_G0270854"/>
<dbReference type="dictyBase" id="DDB_G0270854">
    <property type="gene designation" value="nif3"/>
</dbReference>
<dbReference type="VEuPathDB" id="AmoebaDB:DDB_G0270854"/>
<dbReference type="eggNOG" id="KOG4131">
    <property type="taxonomic scope" value="Eukaryota"/>
</dbReference>
<dbReference type="HOGENOM" id="CLU_037423_0_0_1"/>
<dbReference type="InParanoid" id="Q55E83"/>
<dbReference type="OMA" id="NFDKTHL"/>
<dbReference type="PhylomeDB" id="Q55E83"/>
<dbReference type="PRO" id="PR:Q55E83"/>
<dbReference type="Proteomes" id="UP000002195">
    <property type="component" value="Chromosome 1"/>
</dbReference>
<dbReference type="GO" id="GO:0005737">
    <property type="term" value="C:cytoplasm"/>
    <property type="evidence" value="ECO:0000318"/>
    <property type="project" value="GO_Central"/>
</dbReference>
<dbReference type="GO" id="GO:0005739">
    <property type="term" value="C:mitochondrion"/>
    <property type="evidence" value="ECO:0000318"/>
    <property type="project" value="GO_Central"/>
</dbReference>
<dbReference type="FunFam" id="3.40.1390.30:FF:000001">
    <property type="entry name" value="GTP cyclohydrolase 1 type 2"/>
    <property type="match status" value="1"/>
</dbReference>
<dbReference type="Gene3D" id="3.40.1390.30">
    <property type="entry name" value="NIF3 (NGG1p interacting factor 3)-like"/>
    <property type="match status" value="2"/>
</dbReference>
<dbReference type="InterPro" id="IPR002678">
    <property type="entry name" value="DUF34/NIF3"/>
</dbReference>
<dbReference type="InterPro" id="IPR017222">
    <property type="entry name" value="DUF34/NIF3_animal"/>
</dbReference>
<dbReference type="InterPro" id="IPR036069">
    <property type="entry name" value="DUF34/NIF3_sf"/>
</dbReference>
<dbReference type="NCBIfam" id="TIGR00486">
    <property type="entry name" value="YbgI_SA1388"/>
    <property type="match status" value="1"/>
</dbReference>
<dbReference type="PANTHER" id="PTHR13799">
    <property type="entry name" value="NGG1 INTERACTING FACTOR 3"/>
    <property type="match status" value="1"/>
</dbReference>
<dbReference type="PANTHER" id="PTHR13799:SF13">
    <property type="entry name" value="NIF3-LIKE PROTEIN 1"/>
    <property type="match status" value="1"/>
</dbReference>
<dbReference type="Pfam" id="PF01784">
    <property type="entry name" value="DUF34_NIF3"/>
    <property type="match status" value="1"/>
</dbReference>
<dbReference type="PIRSF" id="PIRSF037490">
    <property type="entry name" value="UCP037490_NIF3_euk"/>
    <property type="match status" value="1"/>
</dbReference>
<dbReference type="SUPFAM" id="SSF102705">
    <property type="entry name" value="NIF3 (NGG1p interacting factor 3)-like"/>
    <property type="match status" value="1"/>
</dbReference>
<feature type="chain" id="PRO_0000330910" description="NIF3-like protein 1">
    <location>
        <begin position="1"/>
        <end position="354"/>
    </location>
</feature>
<organism>
    <name type="scientific">Dictyostelium discoideum</name>
    <name type="common">Social amoeba</name>
    <dbReference type="NCBI Taxonomy" id="44689"/>
    <lineage>
        <taxon>Eukaryota</taxon>
        <taxon>Amoebozoa</taxon>
        <taxon>Evosea</taxon>
        <taxon>Eumycetozoa</taxon>
        <taxon>Dictyostelia</taxon>
        <taxon>Dictyosteliales</taxon>
        <taxon>Dictyosteliaceae</taxon>
        <taxon>Dictyostelium</taxon>
    </lineage>
</organism>
<comment type="similarity">
    <text evidence="2">Belongs to the GTP cyclohydrolase I type 2/NIF3 family.</text>
</comment>
<protein>
    <recommendedName>
        <fullName evidence="2">NIF3-like protein 1</fullName>
    </recommendedName>
</protein>
<keyword id="KW-1185">Reference proteome</keyword>
<name>NIF3L_DICDI</name>
<proteinExistence type="evidence at transcript level"/>
<evidence type="ECO:0000250" key="1">
    <source>
        <dbReference type="UniProtKB" id="Q9GZT8"/>
    </source>
</evidence>
<evidence type="ECO:0000305" key="2"/>